<dbReference type="EMBL" id="CP000023">
    <property type="protein sequence ID" value="AAV60477.1"/>
    <property type="molecule type" value="Genomic_DNA"/>
</dbReference>
<dbReference type="SMR" id="Q5M4T9"/>
<dbReference type="STRING" id="264199.stu0798"/>
<dbReference type="KEGG" id="stl:stu0798"/>
<dbReference type="eggNOG" id="COG0268">
    <property type="taxonomic scope" value="Bacteria"/>
</dbReference>
<dbReference type="HOGENOM" id="CLU_160655_1_1_9"/>
<dbReference type="Proteomes" id="UP000001170">
    <property type="component" value="Chromosome"/>
</dbReference>
<dbReference type="GO" id="GO:0005829">
    <property type="term" value="C:cytosol"/>
    <property type="evidence" value="ECO:0007669"/>
    <property type="project" value="TreeGrafter"/>
</dbReference>
<dbReference type="GO" id="GO:0015935">
    <property type="term" value="C:small ribosomal subunit"/>
    <property type="evidence" value="ECO:0007669"/>
    <property type="project" value="TreeGrafter"/>
</dbReference>
<dbReference type="GO" id="GO:0070181">
    <property type="term" value="F:small ribosomal subunit rRNA binding"/>
    <property type="evidence" value="ECO:0007669"/>
    <property type="project" value="TreeGrafter"/>
</dbReference>
<dbReference type="GO" id="GO:0003735">
    <property type="term" value="F:structural constituent of ribosome"/>
    <property type="evidence" value="ECO:0007669"/>
    <property type="project" value="InterPro"/>
</dbReference>
<dbReference type="GO" id="GO:0006412">
    <property type="term" value="P:translation"/>
    <property type="evidence" value="ECO:0007669"/>
    <property type="project" value="UniProtKB-UniRule"/>
</dbReference>
<dbReference type="FunFam" id="1.20.58.110:FF:000001">
    <property type="entry name" value="30S ribosomal protein S20"/>
    <property type="match status" value="1"/>
</dbReference>
<dbReference type="Gene3D" id="1.20.58.110">
    <property type="entry name" value="Ribosomal protein S20"/>
    <property type="match status" value="1"/>
</dbReference>
<dbReference type="HAMAP" id="MF_00500">
    <property type="entry name" value="Ribosomal_bS20"/>
    <property type="match status" value="1"/>
</dbReference>
<dbReference type="InterPro" id="IPR002583">
    <property type="entry name" value="Ribosomal_bS20"/>
</dbReference>
<dbReference type="InterPro" id="IPR036510">
    <property type="entry name" value="Ribosomal_bS20_sf"/>
</dbReference>
<dbReference type="NCBIfam" id="TIGR00029">
    <property type="entry name" value="S20"/>
    <property type="match status" value="1"/>
</dbReference>
<dbReference type="PANTHER" id="PTHR33398">
    <property type="entry name" value="30S RIBOSOMAL PROTEIN S20"/>
    <property type="match status" value="1"/>
</dbReference>
<dbReference type="PANTHER" id="PTHR33398:SF1">
    <property type="entry name" value="SMALL RIBOSOMAL SUBUNIT PROTEIN BS20C"/>
    <property type="match status" value="1"/>
</dbReference>
<dbReference type="Pfam" id="PF01649">
    <property type="entry name" value="Ribosomal_S20p"/>
    <property type="match status" value="1"/>
</dbReference>
<dbReference type="SUPFAM" id="SSF46992">
    <property type="entry name" value="Ribosomal protein S20"/>
    <property type="match status" value="1"/>
</dbReference>
<proteinExistence type="inferred from homology"/>
<gene>
    <name evidence="1" type="primary">rpsT</name>
    <name type="ordered locus">stu0798</name>
</gene>
<sequence>MEVKTLANIKSAIKRAELNVKQNEKNSAQKSALRTVIKAFKANPTEEAFRAASASIDKAASKGLIHKNKASRDKSRLAAKLAN</sequence>
<name>RS20_STRT2</name>
<comment type="function">
    <text evidence="1">Binds directly to 16S ribosomal RNA.</text>
</comment>
<comment type="similarity">
    <text evidence="1">Belongs to the bacterial ribosomal protein bS20 family.</text>
</comment>
<keyword id="KW-1185">Reference proteome</keyword>
<keyword id="KW-0687">Ribonucleoprotein</keyword>
<keyword id="KW-0689">Ribosomal protein</keyword>
<keyword id="KW-0694">RNA-binding</keyword>
<keyword id="KW-0699">rRNA-binding</keyword>
<protein>
    <recommendedName>
        <fullName evidence="1">Small ribosomal subunit protein bS20</fullName>
    </recommendedName>
    <alternativeName>
        <fullName evidence="3">30S ribosomal protein S20</fullName>
    </alternativeName>
</protein>
<feature type="chain" id="PRO_0000168042" description="Small ribosomal subunit protein bS20">
    <location>
        <begin position="1"/>
        <end position="83"/>
    </location>
</feature>
<feature type="region of interest" description="Disordered" evidence="2">
    <location>
        <begin position="60"/>
        <end position="83"/>
    </location>
</feature>
<evidence type="ECO:0000255" key="1">
    <source>
        <dbReference type="HAMAP-Rule" id="MF_00500"/>
    </source>
</evidence>
<evidence type="ECO:0000256" key="2">
    <source>
        <dbReference type="SAM" id="MobiDB-lite"/>
    </source>
</evidence>
<evidence type="ECO:0000305" key="3"/>
<accession>Q5M4T9</accession>
<reference key="1">
    <citation type="journal article" date="2004" name="Nat. Biotechnol.">
        <title>Complete sequence and comparative genome analysis of the dairy bacterium Streptococcus thermophilus.</title>
        <authorList>
            <person name="Bolotin A."/>
            <person name="Quinquis B."/>
            <person name="Renault P."/>
            <person name="Sorokin A."/>
            <person name="Ehrlich S.D."/>
            <person name="Kulakauskas S."/>
            <person name="Lapidus A."/>
            <person name="Goltsman E."/>
            <person name="Mazur M."/>
            <person name="Pusch G.D."/>
            <person name="Fonstein M."/>
            <person name="Overbeek R."/>
            <person name="Kyprides N."/>
            <person name="Purnelle B."/>
            <person name="Prozzi D."/>
            <person name="Ngui K."/>
            <person name="Masuy D."/>
            <person name="Hancy F."/>
            <person name="Burteau S."/>
            <person name="Boutry M."/>
            <person name="Delcour J."/>
            <person name="Goffeau A."/>
            <person name="Hols P."/>
        </authorList>
    </citation>
    <scope>NUCLEOTIDE SEQUENCE [LARGE SCALE GENOMIC DNA]</scope>
    <source>
        <strain>ATCC BAA-250 / LMG 18311</strain>
    </source>
</reference>
<organism>
    <name type="scientific">Streptococcus thermophilus (strain ATCC BAA-250 / LMG 18311)</name>
    <dbReference type="NCBI Taxonomy" id="264199"/>
    <lineage>
        <taxon>Bacteria</taxon>
        <taxon>Bacillati</taxon>
        <taxon>Bacillota</taxon>
        <taxon>Bacilli</taxon>
        <taxon>Lactobacillales</taxon>
        <taxon>Streptococcaceae</taxon>
        <taxon>Streptococcus</taxon>
    </lineage>
</organism>